<name>KCY_RHILO</name>
<keyword id="KW-0067">ATP-binding</keyword>
<keyword id="KW-0963">Cytoplasm</keyword>
<keyword id="KW-0418">Kinase</keyword>
<keyword id="KW-0547">Nucleotide-binding</keyword>
<keyword id="KW-0808">Transferase</keyword>
<accession>Q98CC2</accession>
<gene>
    <name evidence="1" type="primary">cmk</name>
    <name type="ordered locus">mll5212</name>
</gene>
<feature type="chain" id="PRO_0000131960" description="Cytidylate kinase">
    <location>
        <begin position="1"/>
        <end position="216"/>
    </location>
</feature>
<feature type="binding site" evidence="1">
    <location>
        <begin position="11"/>
        <end position="19"/>
    </location>
    <ligand>
        <name>ATP</name>
        <dbReference type="ChEBI" id="CHEBI:30616"/>
    </ligand>
</feature>
<proteinExistence type="inferred from homology"/>
<sequence length="216" mass="23157">MTHVFTIAIDGPAGAGKGTLARRLADHYRLNLLDTGLTYRAVAYALIQHALPLDNVSAAETAARQVDMAKLDRAVLSAHAIGEAASKVAVYPTVRRILVEKQRAFARTPPGAVLDGRDIGTVVCPDADIKLYVTASAEVRAMRRLAEIESIGGTANFTEILADIVRRDERDMGRADSPLKPAADAHLLDTSEMAIEAAFLAAMAIVDDVLTRRNKA</sequence>
<protein>
    <recommendedName>
        <fullName evidence="1">Cytidylate kinase</fullName>
        <shortName evidence="1">CK</shortName>
        <ecNumber evidence="1">2.7.4.25</ecNumber>
    </recommendedName>
    <alternativeName>
        <fullName evidence="1">Cytidine monophosphate kinase</fullName>
        <shortName evidence="1">CMP kinase</shortName>
    </alternativeName>
</protein>
<comment type="catalytic activity">
    <reaction evidence="1">
        <text>CMP + ATP = CDP + ADP</text>
        <dbReference type="Rhea" id="RHEA:11600"/>
        <dbReference type="ChEBI" id="CHEBI:30616"/>
        <dbReference type="ChEBI" id="CHEBI:58069"/>
        <dbReference type="ChEBI" id="CHEBI:60377"/>
        <dbReference type="ChEBI" id="CHEBI:456216"/>
        <dbReference type="EC" id="2.7.4.25"/>
    </reaction>
</comment>
<comment type="catalytic activity">
    <reaction evidence="1">
        <text>dCMP + ATP = dCDP + ADP</text>
        <dbReference type="Rhea" id="RHEA:25094"/>
        <dbReference type="ChEBI" id="CHEBI:30616"/>
        <dbReference type="ChEBI" id="CHEBI:57566"/>
        <dbReference type="ChEBI" id="CHEBI:58593"/>
        <dbReference type="ChEBI" id="CHEBI:456216"/>
        <dbReference type="EC" id="2.7.4.25"/>
    </reaction>
</comment>
<comment type="subcellular location">
    <subcellularLocation>
        <location evidence="1">Cytoplasm</location>
    </subcellularLocation>
</comment>
<comment type="similarity">
    <text evidence="1">Belongs to the cytidylate kinase family. Type 1 subfamily.</text>
</comment>
<evidence type="ECO:0000255" key="1">
    <source>
        <dbReference type="HAMAP-Rule" id="MF_00238"/>
    </source>
</evidence>
<reference key="1">
    <citation type="journal article" date="2000" name="DNA Res.">
        <title>Complete genome structure of the nitrogen-fixing symbiotic bacterium Mesorhizobium loti.</title>
        <authorList>
            <person name="Kaneko T."/>
            <person name="Nakamura Y."/>
            <person name="Sato S."/>
            <person name="Asamizu E."/>
            <person name="Kato T."/>
            <person name="Sasamoto S."/>
            <person name="Watanabe A."/>
            <person name="Idesawa K."/>
            <person name="Ishikawa A."/>
            <person name="Kawashima K."/>
            <person name="Kimura T."/>
            <person name="Kishida Y."/>
            <person name="Kiyokawa C."/>
            <person name="Kohara M."/>
            <person name="Matsumoto M."/>
            <person name="Matsuno A."/>
            <person name="Mochizuki Y."/>
            <person name="Nakayama S."/>
            <person name="Nakazaki N."/>
            <person name="Shimpo S."/>
            <person name="Sugimoto M."/>
            <person name="Takeuchi C."/>
            <person name="Yamada M."/>
            <person name="Tabata S."/>
        </authorList>
    </citation>
    <scope>NUCLEOTIDE SEQUENCE [LARGE SCALE GENOMIC DNA]</scope>
    <source>
        <strain>LMG 29417 / CECT 9101 / MAFF 303099</strain>
    </source>
</reference>
<dbReference type="EC" id="2.7.4.25" evidence="1"/>
<dbReference type="EMBL" id="BA000012">
    <property type="protein sequence ID" value="BAB51699.1"/>
    <property type="molecule type" value="Genomic_DNA"/>
</dbReference>
<dbReference type="RefSeq" id="WP_010913038.1">
    <property type="nucleotide sequence ID" value="NC_002678.2"/>
</dbReference>
<dbReference type="SMR" id="Q98CC2"/>
<dbReference type="KEGG" id="mlo:mll5212"/>
<dbReference type="PATRIC" id="fig|266835.9.peg.4126"/>
<dbReference type="eggNOG" id="COG0283">
    <property type="taxonomic scope" value="Bacteria"/>
</dbReference>
<dbReference type="HOGENOM" id="CLU_079959_0_1_5"/>
<dbReference type="Proteomes" id="UP000000552">
    <property type="component" value="Chromosome"/>
</dbReference>
<dbReference type="GO" id="GO:0005737">
    <property type="term" value="C:cytoplasm"/>
    <property type="evidence" value="ECO:0007669"/>
    <property type="project" value="UniProtKB-SubCell"/>
</dbReference>
<dbReference type="GO" id="GO:0005524">
    <property type="term" value="F:ATP binding"/>
    <property type="evidence" value="ECO:0007669"/>
    <property type="project" value="UniProtKB-UniRule"/>
</dbReference>
<dbReference type="GO" id="GO:0036430">
    <property type="term" value="F:CMP kinase activity"/>
    <property type="evidence" value="ECO:0007669"/>
    <property type="project" value="RHEA"/>
</dbReference>
<dbReference type="GO" id="GO:0036431">
    <property type="term" value="F:dCMP kinase activity"/>
    <property type="evidence" value="ECO:0007669"/>
    <property type="project" value="RHEA"/>
</dbReference>
<dbReference type="GO" id="GO:0006220">
    <property type="term" value="P:pyrimidine nucleotide metabolic process"/>
    <property type="evidence" value="ECO:0007669"/>
    <property type="project" value="UniProtKB-UniRule"/>
</dbReference>
<dbReference type="CDD" id="cd02020">
    <property type="entry name" value="CMPK"/>
    <property type="match status" value="1"/>
</dbReference>
<dbReference type="Gene3D" id="3.40.50.300">
    <property type="entry name" value="P-loop containing nucleotide triphosphate hydrolases"/>
    <property type="match status" value="1"/>
</dbReference>
<dbReference type="HAMAP" id="MF_00238">
    <property type="entry name" value="Cytidyl_kinase_type1"/>
    <property type="match status" value="1"/>
</dbReference>
<dbReference type="InterPro" id="IPR003136">
    <property type="entry name" value="Cytidylate_kin"/>
</dbReference>
<dbReference type="InterPro" id="IPR011994">
    <property type="entry name" value="Cytidylate_kinase_dom"/>
</dbReference>
<dbReference type="InterPro" id="IPR027417">
    <property type="entry name" value="P-loop_NTPase"/>
</dbReference>
<dbReference type="NCBIfam" id="TIGR00017">
    <property type="entry name" value="cmk"/>
    <property type="match status" value="1"/>
</dbReference>
<dbReference type="Pfam" id="PF02224">
    <property type="entry name" value="Cytidylate_kin"/>
    <property type="match status" value="1"/>
</dbReference>
<dbReference type="SUPFAM" id="SSF52540">
    <property type="entry name" value="P-loop containing nucleoside triphosphate hydrolases"/>
    <property type="match status" value="1"/>
</dbReference>
<organism>
    <name type="scientific">Mesorhizobium japonicum (strain LMG 29417 / CECT 9101 / MAFF 303099)</name>
    <name type="common">Mesorhizobium loti (strain MAFF 303099)</name>
    <dbReference type="NCBI Taxonomy" id="266835"/>
    <lineage>
        <taxon>Bacteria</taxon>
        <taxon>Pseudomonadati</taxon>
        <taxon>Pseudomonadota</taxon>
        <taxon>Alphaproteobacteria</taxon>
        <taxon>Hyphomicrobiales</taxon>
        <taxon>Phyllobacteriaceae</taxon>
        <taxon>Mesorhizobium</taxon>
    </lineage>
</organism>